<proteinExistence type="inferred from homology"/>
<protein>
    <recommendedName>
        <fullName evidence="1">2,3-bisphosphoglycerate-independent phosphoglycerate mutase</fullName>
        <shortName evidence="1">BPG-independent PGAM</shortName>
        <shortName evidence="1">Phosphoglyceromutase</shortName>
        <shortName evidence="1">iPGM</shortName>
        <ecNumber evidence="1">5.4.2.12</ecNumber>
    </recommendedName>
</protein>
<feature type="chain" id="PRO_1000135901" description="2,3-bisphosphoglycerate-independent phosphoglycerate mutase">
    <location>
        <begin position="1"/>
        <end position="542"/>
    </location>
</feature>
<feature type="active site" description="Phosphoserine intermediate" evidence="1">
    <location>
        <position position="63"/>
    </location>
</feature>
<feature type="binding site" evidence="1">
    <location>
        <position position="13"/>
    </location>
    <ligand>
        <name>Mn(2+)</name>
        <dbReference type="ChEBI" id="CHEBI:29035"/>
        <label>2</label>
    </ligand>
</feature>
<feature type="binding site" evidence="1">
    <location>
        <position position="63"/>
    </location>
    <ligand>
        <name>Mn(2+)</name>
        <dbReference type="ChEBI" id="CHEBI:29035"/>
        <label>2</label>
    </ligand>
</feature>
<feature type="binding site" evidence="1">
    <location>
        <position position="124"/>
    </location>
    <ligand>
        <name>substrate</name>
    </ligand>
</feature>
<feature type="binding site" evidence="1">
    <location>
        <begin position="154"/>
        <end position="155"/>
    </location>
    <ligand>
        <name>substrate</name>
    </ligand>
</feature>
<feature type="binding site" evidence="1">
    <location>
        <position position="186"/>
    </location>
    <ligand>
        <name>substrate</name>
    </ligand>
</feature>
<feature type="binding site" evidence="1">
    <location>
        <position position="192"/>
    </location>
    <ligand>
        <name>substrate</name>
    </ligand>
</feature>
<feature type="binding site" evidence="1">
    <location>
        <begin position="263"/>
        <end position="266"/>
    </location>
    <ligand>
        <name>substrate</name>
    </ligand>
</feature>
<feature type="binding site" evidence="1">
    <location>
        <position position="357"/>
    </location>
    <ligand>
        <name>substrate</name>
    </ligand>
</feature>
<feature type="binding site" evidence="1">
    <location>
        <position position="424"/>
    </location>
    <ligand>
        <name>Mn(2+)</name>
        <dbReference type="ChEBI" id="CHEBI:29035"/>
        <label>1</label>
    </ligand>
</feature>
<feature type="binding site" evidence="1">
    <location>
        <position position="428"/>
    </location>
    <ligand>
        <name>Mn(2+)</name>
        <dbReference type="ChEBI" id="CHEBI:29035"/>
        <label>1</label>
    </ligand>
</feature>
<feature type="binding site" evidence="1">
    <location>
        <position position="465"/>
    </location>
    <ligand>
        <name>Mn(2+)</name>
        <dbReference type="ChEBI" id="CHEBI:29035"/>
        <label>2</label>
    </ligand>
</feature>
<feature type="binding site" evidence="1">
    <location>
        <position position="466"/>
    </location>
    <ligand>
        <name>Mn(2+)</name>
        <dbReference type="ChEBI" id="CHEBI:29035"/>
        <label>2</label>
    </ligand>
</feature>
<feature type="binding site" evidence="1">
    <location>
        <position position="484"/>
    </location>
    <ligand>
        <name>Mn(2+)</name>
        <dbReference type="ChEBI" id="CHEBI:29035"/>
        <label>1</label>
    </ligand>
</feature>
<name>GPMI_HERA2</name>
<reference key="1">
    <citation type="journal article" date="2011" name="Stand. Genomic Sci.">
        <title>Complete genome sequence of the filamentous gliding predatory bacterium Herpetosiphon aurantiacus type strain (114-95(T)).</title>
        <authorList>
            <person name="Kiss H."/>
            <person name="Nett M."/>
            <person name="Domin N."/>
            <person name="Martin K."/>
            <person name="Maresca J.A."/>
            <person name="Copeland A."/>
            <person name="Lapidus A."/>
            <person name="Lucas S."/>
            <person name="Berry K.W."/>
            <person name="Glavina Del Rio T."/>
            <person name="Dalin E."/>
            <person name="Tice H."/>
            <person name="Pitluck S."/>
            <person name="Richardson P."/>
            <person name="Bruce D."/>
            <person name="Goodwin L."/>
            <person name="Han C."/>
            <person name="Detter J.C."/>
            <person name="Schmutz J."/>
            <person name="Brettin T."/>
            <person name="Land M."/>
            <person name="Hauser L."/>
            <person name="Kyrpides N.C."/>
            <person name="Ivanova N."/>
            <person name="Goeker M."/>
            <person name="Woyke T."/>
            <person name="Klenk H.P."/>
            <person name="Bryant D.A."/>
        </authorList>
    </citation>
    <scope>NUCLEOTIDE SEQUENCE [LARGE SCALE GENOMIC DNA]</scope>
    <source>
        <strain>ATCC 23779 / DSM 785 / 114-95</strain>
    </source>
</reference>
<organism>
    <name type="scientific">Herpetosiphon aurantiacus (strain ATCC 23779 / DSM 785 / 114-95)</name>
    <dbReference type="NCBI Taxonomy" id="316274"/>
    <lineage>
        <taxon>Bacteria</taxon>
        <taxon>Bacillati</taxon>
        <taxon>Chloroflexota</taxon>
        <taxon>Chloroflexia</taxon>
        <taxon>Herpetosiphonales</taxon>
        <taxon>Herpetosiphonaceae</taxon>
        <taxon>Herpetosiphon</taxon>
    </lineage>
</organism>
<evidence type="ECO:0000255" key="1">
    <source>
        <dbReference type="HAMAP-Rule" id="MF_01038"/>
    </source>
</evidence>
<accession>A9AYE8</accession>
<gene>
    <name evidence="1" type="primary">gpmI</name>
    <name type="ordered locus">Haur_0882</name>
</gene>
<keyword id="KW-0324">Glycolysis</keyword>
<keyword id="KW-0413">Isomerase</keyword>
<keyword id="KW-0464">Manganese</keyword>
<keyword id="KW-0479">Metal-binding</keyword>
<dbReference type="EC" id="5.4.2.12" evidence="1"/>
<dbReference type="EMBL" id="CP000875">
    <property type="protein sequence ID" value="ABX03530.1"/>
    <property type="molecule type" value="Genomic_DNA"/>
</dbReference>
<dbReference type="SMR" id="A9AYE8"/>
<dbReference type="FunCoup" id="A9AYE8">
    <property type="interactions" value="344"/>
</dbReference>
<dbReference type="STRING" id="316274.Haur_0882"/>
<dbReference type="KEGG" id="hau:Haur_0882"/>
<dbReference type="eggNOG" id="COG0696">
    <property type="taxonomic scope" value="Bacteria"/>
</dbReference>
<dbReference type="HOGENOM" id="CLU_026099_2_0_0"/>
<dbReference type="InParanoid" id="A9AYE8"/>
<dbReference type="UniPathway" id="UPA00109">
    <property type="reaction ID" value="UER00186"/>
</dbReference>
<dbReference type="Proteomes" id="UP000000787">
    <property type="component" value="Chromosome"/>
</dbReference>
<dbReference type="GO" id="GO:0005829">
    <property type="term" value="C:cytosol"/>
    <property type="evidence" value="ECO:0007669"/>
    <property type="project" value="TreeGrafter"/>
</dbReference>
<dbReference type="GO" id="GO:0030145">
    <property type="term" value="F:manganese ion binding"/>
    <property type="evidence" value="ECO:0007669"/>
    <property type="project" value="UniProtKB-UniRule"/>
</dbReference>
<dbReference type="GO" id="GO:0004619">
    <property type="term" value="F:phosphoglycerate mutase activity"/>
    <property type="evidence" value="ECO:0007669"/>
    <property type="project" value="UniProtKB-EC"/>
</dbReference>
<dbReference type="GO" id="GO:0006007">
    <property type="term" value="P:glucose catabolic process"/>
    <property type="evidence" value="ECO:0007669"/>
    <property type="project" value="InterPro"/>
</dbReference>
<dbReference type="GO" id="GO:0006096">
    <property type="term" value="P:glycolytic process"/>
    <property type="evidence" value="ECO:0007669"/>
    <property type="project" value="UniProtKB-UniRule"/>
</dbReference>
<dbReference type="CDD" id="cd16010">
    <property type="entry name" value="iPGM"/>
    <property type="match status" value="1"/>
</dbReference>
<dbReference type="FunFam" id="3.40.1450.10:FF:000002">
    <property type="entry name" value="2,3-bisphosphoglycerate-independent phosphoglycerate mutase"/>
    <property type="match status" value="1"/>
</dbReference>
<dbReference type="Gene3D" id="3.40.720.10">
    <property type="entry name" value="Alkaline Phosphatase, subunit A"/>
    <property type="match status" value="1"/>
</dbReference>
<dbReference type="Gene3D" id="3.40.1450.10">
    <property type="entry name" value="BPG-independent phosphoglycerate mutase, domain B"/>
    <property type="match status" value="1"/>
</dbReference>
<dbReference type="HAMAP" id="MF_01038">
    <property type="entry name" value="GpmI"/>
    <property type="match status" value="1"/>
</dbReference>
<dbReference type="InterPro" id="IPR017850">
    <property type="entry name" value="Alkaline_phosphatase_core_sf"/>
</dbReference>
<dbReference type="InterPro" id="IPR011258">
    <property type="entry name" value="BPG-indep_PGM_N"/>
</dbReference>
<dbReference type="InterPro" id="IPR006124">
    <property type="entry name" value="Metalloenzyme"/>
</dbReference>
<dbReference type="InterPro" id="IPR036646">
    <property type="entry name" value="PGAM_B_sf"/>
</dbReference>
<dbReference type="InterPro" id="IPR005995">
    <property type="entry name" value="Pgm_bpd_ind"/>
</dbReference>
<dbReference type="NCBIfam" id="TIGR01307">
    <property type="entry name" value="pgm_bpd_ind"/>
    <property type="match status" value="1"/>
</dbReference>
<dbReference type="PANTHER" id="PTHR31637">
    <property type="entry name" value="2,3-BISPHOSPHOGLYCERATE-INDEPENDENT PHOSPHOGLYCERATE MUTASE"/>
    <property type="match status" value="1"/>
</dbReference>
<dbReference type="PANTHER" id="PTHR31637:SF0">
    <property type="entry name" value="2,3-BISPHOSPHOGLYCERATE-INDEPENDENT PHOSPHOGLYCERATE MUTASE"/>
    <property type="match status" value="1"/>
</dbReference>
<dbReference type="Pfam" id="PF06415">
    <property type="entry name" value="iPGM_N"/>
    <property type="match status" value="1"/>
</dbReference>
<dbReference type="Pfam" id="PF01676">
    <property type="entry name" value="Metalloenzyme"/>
    <property type="match status" value="1"/>
</dbReference>
<dbReference type="PIRSF" id="PIRSF001492">
    <property type="entry name" value="IPGAM"/>
    <property type="match status" value="1"/>
</dbReference>
<dbReference type="SUPFAM" id="SSF64158">
    <property type="entry name" value="2,3-Bisphosphoglycerate-independent phosphoglycerate mutase, substrate-binding domain"/>
    <property type="match status" value="1"/>
</dbReference>
<dbReference type="SUPFAM" id="SSF53649">
    <property type="entry name" value="Alkaline phosphatase-like"/>
    <property type="match status" value="1"/>
</dbReference>
<sequence>MTTPRPVLLAIMDGWGLAPAGPGNGVSLANTPNVNHWMATCPTTQLHASGLDVGLPEGQIGNSEVGHLNIGAGLVVYQDSTRISESIKSGEFFENPAFLEAVQIVKERGTNMHLIGLIGRGGVHAYDIHLAGLLQLMAQQGVNHTYIHAFMDGRDTLPQSGLGYMRELQQTISQIGVGQVASVIGRYYAMDRDKRWERVGAAYAAMVEGVGHTASDPISAIEQAYLRDARGDEFIEATVITDSAGVALPRISTGDVVICFNFRADRVRQITRALMQSDLNTMIQEWYANQAEQGLQLPTTIWQRPEQVSNLHYVTMTQYDATFPYAIAYPPHYITEPLAKVIADAGKRQYHSAETEKYPHVTFFLNGRREEPFAGEDRVMAASPKVATYDLQPEMSAEEVAAKLLDAVNSQIYDFLVVNFANPDMVGHTGVIPAVVKACETVDRCLGQVVPAVVAQGGAAILIADHGNAEQMIDPQTGGPHTAHTTNLVPCILVADPATGLTREQISLRAGGRLADLAPTILDLLGLQKAAAMTGTSLIETK</sequence>
<comment type="function">
    <text evidence="1">Catalyzes the interconversion of 2-phosphoglycerate and 3-phosphoglycerate.</text>
</comment>
<comment type="catalytic activity">
    <reaction evidence="1">
        <text>(2R)-2-phosphoglycerate = (2R)-3-phosphoglycerate</text>
        <dbReference type="Rhea" id="RHEA:15901"/>
        <dbReference type="ChEBI" id="CHEBI:58272"/>
        <dbReference type="ChEBI" id="CHEBI:58289"/>
        <dbReference type="EC" id="5.4.2.12"/>
    </reaction>
</comment>
<comment type="cofactor">
    <cofactor evidence="1">
        <name>Mn(2+)</name>
        <dbReference type="ChEBI" id="CHEBI:29035"/>
    </cofactor>
    <text evidence="1">Binds 2 manganese ions per subunit.</text>
</comment>
<comment type="pathway">
    <text evidence="1">Carbohydrate degradation; glycolysis; pyruvate from D-glyceraldehyde 3-phosphate: step 3/5.</text>
</comment>
<comment type="subunit">
    <text evidence="1">Monomer.</text>
</comment>
<comment type="similarity">
    <text evidence="1">Belongs to the BPG-independent phosphoglycerate mutase family.</text>
</comment>